<sequence length="372" mass="40843">MKYDLIIIGSGSVGAAAGYYATRAGLNVLMTDAHMPPHQHGSHHGDTRLIRHAYGEGEKYVPLVLRAQTLWDDLSRHNEDDPIFVRSGVINLGPADSAFLANVAHSAEQWQLNVEKLDAQGIMARWPEIRVPDNYIGLFETDSGFLRSELAIKTWIQLAKEAGCAQLFNCPVTAIRHEDDGVTIETADGEYQAKKAIVCAGTWVKDLLPELPVQPVRKVFAWYQADGRYSVKNKFPAFTGELPNGDQYYGFPAENDALKIGKHNGGLVIHSADERVPFAEVASDGSEAFPFLRNVLPGIGCCLYGAACTYDNSPDEDFIIDTLPGHDNTLLITGLSGHGFKFASVLGEIAADFAQDKKSDFDLTPFRLSRFQ</sequence>
<gene>
    <name evidence="1" type="primary">solA</name>
    <name type="ordered locus">SDY_2096</name>
</gene>
<protein>
    <recommendedName>
        <fullName evidence="1">N-methyl-L-tryptophan oxidase</fullName>
        <shortName evidence="1">MTOX</shortName>
        <ecNumber evidence="1">1.5.3.-</ecNumber>
    </recommendedName>
</protein>
<dbReference type="EC" id="1.5.3.-" evidence="1"/>
<dbReference type="EMBL" id="CP000034">
    <property type="protein sequence ID" value="ABB62187.1"/>
    <property type="molecule type" value="Genomic_DNA"/>
</dbReference>
<dbReference type="RefSeq" id="WP_000872799.1">
    <property type="nucleotide sequence ID" value="NC_007606.1"/>
</dbReference>
<dbReference type="RefSeq" id="YP_403678.1">
    <property type="nucleotide sequence ID" value="NC_007606.1"/>
</dbReference>
<dbReference type="SMR" id="Q32ER8"/>
<dbReference type="STRING" id="300267.SDY_2096"/>
<dbReference type="EnsemblBacteria" id="ABB62187">
    <property type="protein sequence ID" value="ABB62187"/>
    <property type="gene ID" value="SDY_2096"/>
</dbReference>
<dbReference type="KEGG" id="sdy:SDY_2096"/>
<dbReference type="PATRIC" id="fig|300267.13.peg.2521"/>
<dbReference type="HOGENOM" id="CLU_007884_2_1_6"/>
<dbReference type="Proteomes" id="UP000002716">
    <property type="component" value="Chromosome"/>
</dbReference>
<dbReference type="GO" id="GO:0005829">
    <property type="term" value="C:cytosol"/>
    <property type="evidence" value="ECO:0007669"/>
    <property type="project" value="TreeGrafter"/>
</dbReference>
<dbReference type="GO" id="GO:0050660">
    <property type="term" value="F:flavin adenine dinucleotide binding"/>
    <property type="evidence" value="ECO:0007669"/>
    <property type="project" value="InterPro"/>
</dbReference>
<dbReference type="GO" id="GO:0050131">
    <property type="term" value="F:N-methyl-L-amino-acid oxidase activity"/>
    <property type="evidence" value="ECO:0007669"/>
    <property type="project" value="InterPro"/>
</dbReference>
<dbReference type="GO" id="GO:0008115">
    <property type="term" value="F:sarcosine oxidase activity"/>
    <property type="evidence" value="ECO:0007669"/>
    <property type="project" value="TreeGrafter"/>
</dbReference>
<dbReference type="Gene3D" id="3.30.9.10">
    <property type="entry name" value="D-Amino Acid Oxidase, subunit A, domain 2"/>
    <property type="match status" value="1"/>
</dbReference>
<dbReference type="Gene3D" id="3.50.50.60">
    <property type="entry name" value="FAD/NAD(P)-binding domain"/>
    <property type="match status" value="1"/>
</dbReference>
<dbReference type="HAMAP" id="MF_00515">
    <property type="entry name" value="MTOX"/>
    <property type="match status" value="1"/>
</dbReference>
<dbReference type="InterPro" id="IPR006076">
    <property type="entry name" value="FAD-dep_OxRdtase"/>
</dbReference>
<dbReference type="InterPro" id="IPR036188">
    <property type="entry name" value="FAD/NAD-bd_sf"/>
</dbReference>
<dbReference type="InterPro" id="IPR023493">
    <property type="entry name" value="Me_Trp_Oxase_MTOX"/>
</dbReference>
<dbReference type="InterPro" id="IPR045170">
    <property type="entry name" value="MTOX"/>
</dbReference>
<dbReference type="NCBIfam" id="NF008425">
    <property type="entry name" value="PRK11259.1"/>
    <property type="match status" value="1"/>
</dbReference>
<dbReference type="PANTHER" id="PTHR10961:SF7">
    <property type="entry name" value="FAD DEPENDENT OXIDOREDUCTASE DOMAIN-CONTAINING PROTEIN"/>
    <property type="match status" value="1"/>
</dbReference>
<dbReference type="PANTHER" id="PTHR10961">
    <property type="entry name" value="PEROXISOMAL SARCOSINE OXIDASE"/>
    <property type="match status" value="1"/>
</dbReference>
<dbReference type="Pfam" id="PF01266">
    <property type="entry name" value="DAO"/>
    <property type="match status" value="1"/>
</dbReference>
<dbReference type="SUPFAM" id="SSF54373">
    <property type="entry name" value="FAD-linked reductases, C-terminal domain"/>
    <property type="match status" value="1"/>
</dbReference>
<dbReference type="SUPFAM" id="SSF51905">
    <property type="entry name" value="FAD/NAD(P)-binding domain"/>
    <property type="match status" value="1"/>
</dbReference>
<proteinExistence type="inferred from homology"/>
<comment type="function">
    <text evidence="1">Catalyzes the oxidative demethylation of N-methyl-L-tryptophan.</text>
</comment>
<comment type="catalytic activity">
    <reaction evidence="1">
        <text>N(alpha)-methyl-L-tryptophan + O2 + H2O = L-tryptophan + formaldehyde + H2O2</text>
        <dbReference type="Rhea" id="RHEA:28006"/>
        <dbReference type="ChEBI" id="CHEBI:15377"/>
        <dbReference type="ChEBI" id="CHEBI:15379"/>
        <dbReference type="ChEBI" id="CHEBI:16240"/>
        <dbReference type="ChEBI" id="CHEBI:16842"/>
        <dbReference type="ChEBI" id="CHEBI:57283"/>
        <dbReference type="ChEBI" id="CHEBI:57912"/>
    </reaction>
</comment>
<comment type="cofactor">
    <cofactor evidence="1">
        <name>FAD</name>
        <dbReference type="ChEBI" id="CHEBI:57692"/>
    </cofactor>
    <text evidence="1">Binds 1 FAD per subunit.</text>
</comment>
<comment type="subunit">
    <text evidence="1">Monomer.</text>
</comment>
<comment type="similarity">
    <text evidence="1">Belongs to the MSOX/MTOX family. MTOX subfamily.</text>
</comment>
<accession>Q32ER8</accession>
<evidence type="ECO:0000255" key="1">
    <source>
        <dbReference type="HAMAP-Rule" id="MF_00515"/>
    </source>
</evidence>
<keyword id="KW-0274">FAD</keyword>
<keyword id="KW-0285">Flavoprotein</keyword>
<keyword id="KW-0560">Oxidoreductase</keyword>
<keyword id="KW-1185">Reference proteome</keyword>
<organism>
    <name type="scientific">Shigella dysenteriae serotype 1 (strain Sd197)</name>
    <dbReference type="NCBI Taxonomy" id="300267"/>
    <lineage>
        <taxon>Bacteria</taxon>
        <taxon>Pseudomonadati</taxon>
        <taxon>Pseudomonadota</taxon>
        <taxon>Gammaproteobacteria</taxon>
        <taxon>Enterobacterales</taxon>
        <taxon>Enterobacteriaceae</taxon>
        <taxon>Shigella</taxon>
    </lineage>
</organism>
<name>MTOX_SHIDS</name>
<feature type="chain" id="PRO_0000259024" description="N-methyl-L-tryptophan oxidase">
    <location>
        <begin position="1"/>
        <end position="372"/>
    </location>
</feature>
<feature type="binding site" evidence="1">
    <location>
        <begin position="4"/>
        <end position="34"/>
    </location>
    <ligand>
        <name>FAD</name>
        <dbReference type="ChEBI" id="CHEBI:57692"/>
    </ligand>
</feature>
<feature type="modified residue" description="S-8alpha-FAD cysteine" evidence="1">
    <location>
        <position position="308"/>
    </location>
</feature>
<reference key="1">
    <citation type="journal article" date="2005" name="Nucleic Acids Res.">
        <title>Genome dynamics and diversity of Shigella species, the etiologic agents of bacillary dysentery.</title>
        <authorList>
            <person name="Yang F."/>
            <person name="Yang J."/>
            <person name="Zhang X."/>
            <person name="Chen L."/>
            <person name="Jiang Y."/>
            <person name="Yan Y."/>
            <person name="Tang X."/>
            <person name="Wang J."/>
            <person name="Xiong Z."/>
            <person name="Dong J."/>
            <person name="Xue Y."/>
            <person name="Zhu Y."/>
            <person name="Xu X."/>
            <person name="Sun L."/>
            <person name="Chen S."/>
            <person name="Nie H."/>
            <person name="Peng J."/>
            <person name="Xu J."/>
            <person name="Wang Y."/>
            <person name="Yuan Z."/>
            <person name="Wen Y."/>
            <person name="Yao Z."/>
            <person name="Shen Y."/>
            <person name="Qiang B."/>
            <person name="Hou Y."/>
            <person name="Yu J."/>
            <person name="Jin Q."/>
        </authorList>
    </citation>
    <scope>NUCLEOTIDE SEQUENCE [LARGE SCALE GENOMIC DNA]</scope>
    <source>
        <strain>Sd197</strain>
    </source>
</reference>